<name>RL31B_VIBCH</name>
<comment type="subunit">
    <text evidence="1">Part of the 50S ribosomal subunit.</text>
</comment>
<comment type="induction">
    <text>May be induced under zinc-limiting conditions; in that case may be repressed by the zinc uptake regulation protein zur.</text>
</comment>
<comment type="similarity">
    <text evidence="2">Belongs to the bacterial ribosomal protein bL31 family. Type B subfamily.</text>
</comment>
<accession>Q9KTM4</accession>
<organism>
    <name type="scientific">Vibrio cholerae serotype O1 (strain ATCC 39315 / El Tor Inaba N16961)</name>
    <dbReference type="NCBI Taxonomy" id="243277"/>
    <lineage>
        <taxon>Bacteria</taxon>
        <taxon>Pseudomonadati</taxon>
        <taxon>Pseudomonadota</taxon>
        <taxon>Gammaproteobacteria</taxon>
        <taxon>Vibrionales</taxon>
        <taxon>Vibrionaceae</taxon>
        <taxon>Vibrio</taxon>
    </lineage>
</organism>
<sequence length="85" mass="9929">MKAGIHPDYRKVVFHDTTVDHYFVVGSTLQTDRTIEWEGKTYPYITIEVSSESHPFYTGKQRVVQKEGRVANFTRRFGQFAKESK</sequence>
<reference key="1">
    <citation type="journal article" date="2000" name="Nature">
        <title>DNA sequence of both chromosomes of the cholera pathogen Vibrio cholerae.</title>
        <authorList>
            <person name="Heidelberg J.F."/>
            <person name="Eisen J.A."/>
            <person name="Nelson W.C."/>
            <person name="Clayton R.A."/>
            <person name="Gwinn M.L."/>
            <person name="Dodson R.J."/>
            <person name="Haft D.H."/>
            <person name="Hickey E.K."/>
            <person name="Peterson J.D."/>
            <person name="Umayam L.A."/>
            <person name="Gill S.R."/>
            <person name="Nelson K.E."/>
            <person name="Read T.D."/>
            <person name="Tettelin H."/>
            <person name="Richardson D.L."/>
            <person name="Ermolaeva M.D."/>
            <person name="Vamathevan J.J."/>
            <person name="Bass S."/>
            <person name="Qin H."/>
            <person name="Dragoi I."/>
            <person name="Sellers P."/>
            <person name="McDonald L.A."/>
            <person name="Utterback T.R."/>
            <person name="Fleischmann R.D."/>
            <person name="Nierman W.C."/>
            <person name="White O."/>
            <person name="Salzberg S.L."/>
            <person name="Smith H.O."/>
            <person name="Colwell R.R."/>
            <person name="Mekalanos J.J."/>
            <person name="Venter J.C."/>
            <person name="Fraser C.M."/>
        </authorList>
    </citation>
    <scope>NUCLEOTIDE SEQUENCE [LARGE SCALE GENOMIC DNA]</scope>
    <source>
        <strain>ATCC 39315 / El Tor Inaba N16961</strain>
    </source>
</reference>
<reference key="2">
    <citation type="journal article" date="2003" name="Proc. Natl. Acad. Sci. U.S.A.">
        <title>Comparative genomics of bacterial zinc regulons: enhanced ion transport, pathogenesis, and rearrangement of ribosomal proteins.</title>
        <authorList>
            <person name="Panina E.M."/>
            <person name="Mironov A.A."/>
            <person name="Gelfand M.S."/>
        </authorList>
    </citation>
    <scope>DISCUSSION OF POSSIBLE REGULATION</scope>
    <source>
        <strain>ATCC 39315 / El Tor Inaba N16961</strain>
    </source>
</reference>
<dbReference type="EMBL" id="AE003852">
    <property type="protein sequence ID" value="AAF94040.1"/>
    <property type="molecule type" value="Genomic_DNA"/>
</dbReference>
<dbReference type="PIR" id="C82269">
    <property type="entry name" value="C82269"/>
</dbReference>
<dbReference type="RefSeq" id="NP_230525.1">
    <property type="nucleotide sequence ID" value="NC_002505.1"/>
</dbReference>
<dbReference type="RefSeq" id="WP_000643440.1">
    <property type="nucleotide sequence ID" value="NZ_LT906614.1"/>
</dbReference>
<dbReference type="SMR" id="Q9KTM4"/>
<dbReference type="STRING" id="243277.VC_0878"/>
<dbReference type="DNASU" id="2614545"/>
<dbReference type="EnsemblBacteria" id="AAF94040">
    <property type="protein sequence ID" value="AAF94040"/>
    <property type="gene ID" value="VC_0878"/>
</dbReference>
<dbReference type="KEGG" id="vch:VC_0878"/>
<dbReference type="PATRIC" id="fig|243277.26.peg.836"/>
<dbReference type="eggNOG" id="COG0254">
    <property type="taxonomic scope" value="Bacteria"/>
</dbReference>
<dbReference type="HOGENOM" id="CLU_114306_2_1_6"/>
<dbReference type="Proteomes" id="UP000000584">
    <property type="component" value="Chromosome 1"/>
</dbReference>
<dbReference type="GO" id="GO:1990904">
    <property type="term" value="C:ribonucleoprotein complex"/>
    <property type="evidence" value="ECO:0007669"/>
    <property type="project" value="UniProtKB-KW"/>
</dbReference>
<dbReference type="GO" id="GO:0005840">
    <property type="term" value="C:ribosome"/>
    <property type="evidence" value="ECO:0007669"/>
    <property type="project" value="UniProtKB-KW"/>
</dbReference>
<dbReference type="GO" id="GO:0003735">
    <property type="term" value="F:structural constituent of ribosome"/>
    <property type="evidence" value="ECO:0007669"/>
    <property type="project" value="InterPro"/>
</dbReference>
<dbReference type="GO" id="GO:0006412">
    <property type="term" value="P:translation"/>
    <property type="evidence" value="ECO:0007669"/>
    <property type="project" value="UniProtKB-UniRule"/>
</dbReference>
<dbReference type="Gene3D" id="4.10.830.30">
    <property type="entry name" value="Ribosomal protein L31"/>
    <property type="match status" value="1"/>
</dbReference>
<dbReference type="HAMAP" id="MF_00502">
    <property type="entry name" value="Ribosomal_bL31_2"/>
    <property type="match status" value="1"/>
</dbReference>
<dbReference type="InterPro" id="IPR034704">
    <property type="entry name" value="Ribosomal_bL28/bL31-like_sf"/>
</dbReference>
<dbReference type="InterPro" id="IPR002150">
    <property type="entry name" value="Ribosomal_bL31"/>
</dbReference>
<dbReference type="InterPro" id="IPR027493">
    <property type="entry name" value="Ribosomal_bL31_B"/>
</dbReference>
<dbReference type="InterPro" id="IPR042105">
    <property type="entry name" value="Ribosomal_bL31_sf"/>
</dbReference>
<dbReference type="NCBIfam" id="TIGR00105">
    <property type="entry name" value="L31"/>
    <property type="match status" value="1"/>
</dbReference>
<dbReference type="NCBIfam" id="NF002462">
    <property type="entry name" value="PRK01678.1"/>
    <property type="match status" value="1"/>
</dbReference>
<dbReference type="PANTHER" id="PTHR33280">
    <property type="entry name" value="50S RIBOSOMAL PROTEIN L31, CHLOROPLASTIC"/>
    <property type="match status" value="1"/>
</dbReference>
<dbReference type="PANTHER" id="PTHR33280:SF1">
    <property type="entry name" value="LARGE RIBOSOMAL SUBUNIT PROTEIN BL31C"/>
    <property type="match status" value="1"/>
</dbReference>
<dbReference type="Pfam" id="PF01197">
    <property type="entry name" value="Ribosomal_L31"/>
    <property type="match status" value="1"/>
</dbReference>
<dbReference type="PRINTS" id="PR01249">
    <property type="entry name" value="RIBOSOMALL31"/>
</dbReference>
<dbReference type="SUPFAM" id="SSF143800">
    <property type="entry name" value="L28p-like"/>
    <property type="match status" value="1"/>
</dbReference>
<dbReference type="PROSITE" id="PS01143">
    <property type="entry name" value="RIBOSOMAL_L31"/>
    <property type="match status" value="1"/>
</dbReference>
<evidence type="ECO:0000250" key="1"/>
<evidence type="ECO:0000305" key="2"/>
<keyword id="KW-1185">Reference proteome</keyword>
<keyword id="KW-0687">Ribonucleoprotein</keyword>
<keyword id="KW-0689">Ribosomal protein</keyword>
<feature type="chain" id="PRO_0000173280" description="Large ribosomal subunit protein bL31B">
    <location>
        <begin position="1"/>
        <end position="85"/>
    </location>
</feature>
<protein>
    <recommendedName>
        <fullName evidence="2">Large ribosomal subunit protein bL31B</fullName>
    </recommendedName>
    <alternativeName>
        <fullName>50S ribosomal protein L31 type B</fullName>
    </alternativeName>
</protein>
<gene>
    <name type="primary">rpmE2</name>
    <name type="ordered locus">VC_0878</name>
</gene>
<proteinExistence type="evidence at transcript level"/>